<accession>Q2KN99</accession>
<proteinExistence type="evidence at protein level"/>
<name>CYTSA_RAT</name>
<comment type="function">
    <text evidence="1">Involved in cytokinesis and spindle organization. May play a role in actin cytoskeleton organization and microtubule stabilization and hence required for proper cell adhesion and migration (By similarity).</text>
</comment>
<comment type="subunit">
    <text evidence="1">May interact with both microtubules and actin cytoskeleton.</text>
</comment>
<comment type="subcellular location">
    <subcellularLocation>
        <location evidence="1">Cytoplasm</location>
        <location evidence="1">Cytoskeleton</location>
    </subcellularLocation>
    <subcellularLocation>
        <location evidence="1">Cytoplasm</location>
        <location evidence="1">Cytoskeleton</location>
        <location evidence="1">Spindle</location>
    </subcellularLocation>
    <subcellularLocation>
        <location evidence="1">Cell junction</location>
        <location evidence="1">Gap junction</location>
    </subcellularLocation>
    <text evidence="1">Colocalizes with beta-tubulin, acetylated alpha-tubulin and F-actin. Also observed in a ring around gamma-tubulin containing centrioles possibly in the microtubule organizing center (By similarity).</text>
</comment>
<comment type="similarity">
    <text evidence="7">Belongs to the cytospin-A family.</text>
</comment>
<evidence type="ECO:0000250" key="1"/>
<evidence type="ECO:0000250" key="2">
    <source>
        <dbReference type="UniProtKB" id="Q2KN98"/>
    </source>
</evidence>
<evidence type="ECO:0000250" key="3">
    <source>
        <dbReference type="UniProtKB" id="Q69YQ0"/>
    </source>
</evidence>
<evidence type="ECO:0000255" key="4"/>
<evidence type="ECO:0000255" key="5">
    <source>
        <dbReference type="PROSITE-ProRule" id="PRU00044"/>
    </source>
</evidence>
<evidence type="ECO:0000256" key="6">
    <source>
        <dbReference type="SAM" id="MobiDB-lite"/>
    </source>
</evidence>
<evidence type="ECO:0000305" key="7"/>
<evidence type="ECO:0007744" key="8">
    <source>
    </source>
</evidence>
<reference key="1">
    <citation type="submission" date="2005-01" db="EMBL/GenBank/DDBJ databases">
        <title>Characterization of cytospin A as a multiple coiled coil protein involved in cytokinesis and spindle organization.</title>
        <authorList>
            <person name="Huang C.-H."/>
            <person name="Ye T."/>
            <person name="Chen Y."/>
        </authorList>
    </citation>
    <scope>NUCLEOTIDE SEQUENCE [MRNA]</scope>
</reference>
<reference key="2">
    <citation type="journal article" date="2012" name="Nat. Commun.">
        <title>Quantitative maps of protein phosphorylation sites across 14 different rat organs and tissues.</title>
        <authorList>
            <person name="Lundby A."/>
            <person name="Secher A."/>
            <person name="Lage K."/>
            <person name="Nordsborg N.B."/>
            <person name="Dmytriyev A."/>
            <person name="Lundby C."/>
            <person name="Olsen J.V."/>
        </authorList>
    </citation>
    <scope>PHOSPHORYLATION [LARGE SCALE ANALYSIS] AT SER-888</scope>
    <scope>IDENTIFICATION BY MASS SPECTROMETRY [LARGE SCALE ANALYSIS]</scope>
</reference>
<gene>
    <name type="primary">Specc1l</name>
    <name type="synonym">Cytsa</name>
</gene>
<keyword id="KW-0131">Cell cycle</keyword>
<keyword id="KW-0132">Cell division</keyword>
<keyword id="KW-0965">Cell junction</keyword>
<keyword id="KW-0175">Coiled coil</keyword>
<keyword id="KW-0963">Cytoplasm</keyword>
<keyword id="KW-0206">Cytoskeleton</keyword>
<keyword id="KW-0303">Gap junction</keyword>
<keyword id="KW-0597">Phosphoprotein</keyword>
<keyword id="KW-1185">Reference proteome</keyword>
<protein>
    <recommendedName>
        <fullName>Cytospin-A</fullName>
    </recommendedName>
    <alternativeName>
        <fullName>SPECC1-like protein</fullName>
    </alternativeName>
    <alternativeName>
        <fullName>Sperm antigen with calponin homology and coiled-coil domains 1-like</fullName>
    </alternativeName>
</protein>
<organism>
    <name type="scientific">Rattus norvegicus</name>
    <name type="common">Rat</name>
    <dbReference type="NCBI Taxonomy" id="10116"/>
    <lineage>
        <taxon>Eukaryota</taxon>
        <taxon>Metazoa</taxon>
        <taxon>Chordata</taxon>
        <taxon>Craniata</taxon>
        <taxon>Vertebrata</taxon>
        <taxon>Euteleostomi</taxon>
        <taxon>Mammalia</taxon>
        <taxon>Eutheria</taxon>
        <taxon>Euarchontoglires</taxon>
        <taxon>Glires</taxon>
        <taxon>Rodentia</taxon>
        <taxon>Myomorpha</taxon>
        <taxon>Muroidea</taxon>
        <taxon>Muridae</taxon>
        <taxon>Murinae</taxon>
        <taxon>Rattus</taxon>
    </lineage>
</organism>
<dbReference type="EMBL" id="AY884296">
    <property type="protein sequence ID" value="AAX84187.1"/>
    <property type="molecule type" value="mRNA"/>
</dbReference>
<dbReference type="RefSeq" id="NP_001034544.1">
    <property type="nucleotide sequence ID" value="NM_001039455.2"/>
</dbReference>
<dbReference type="RefSeq" id="XP_006256401.1">
    <property type="nucleotide sequence ID" value="XM_006256339.5"/>
</dbReference>
<dbReference type="SMR" id="Q2KN99"/>
<dbReference type="BioGRID" id="262991">
    <property type="interactions" value="2"/>
</dbReference>
<dbReference type="FunCoup" id="Q2KN99">
    <property type="interactions" value="3747"/>
</dbReference>
<dbReference type="IntAct" id="Q2KN99">
    <property type="interactions" value="1"/>
</dbReference>
<dbReference type="MINT" id="Q2KN99"/>
<dbReference type="STRING" id="10116.ENSRNOP00000001764"/>
<dbReference type="GlyGen" id="Q2KN99">
    <property type="glycosylation" value="2 sites"/>
</dbReference>
<dbReference type="iPTMnet" id="Q2KN99"/>
<dbReference type="PhosphoSitePlus" id="Q2KN99"/>
<dbReference type="jPOST" id="Q2KN99"/>
<dbReference type="PaxDb" id="10116-ENSRNOP00000001764"/>
<dbReference type="Ensembl" id="ENSRNOT00000001764.6">
    <property type="protein sequence ID" value="ENSRNOP00000001764.4"/>
    <property type="gene ID" value="ENSRNOG00000001303.7"/>
</dbReference>
<dbReference type="GeneID" id="361828"/>
<dbReference type="KEGG" id="rno:361828"/>
<dbReference type="UCSC" id="RGD:1309570">
    <property type="organism name" value="rat"/>
</dbReference>
<dbReference type="AGR" id="RGD:1309570"/>
<dbReference type="CTD" id="23384"/>
<dbReference type="RGD" id="1309570">
    <property type="gene designation" value="Specc1l"/>
</dbReference>
<dbReference type="eggNOG" id="KOG4678">
    <property type="taxonomic scope" value="Eukaryota"/>
</dbReference>
<dbReference type="GeneTree" id="ENSGT00940000153592"/>
<dbReference type="HOGENOM" id="CLU_009328_1_0_1"/>
<dbReference type="InParanoid" id="Q2KN99"/>
<dbReference type="OrthoDB" id="21607at2759"/>
<dbReference type="PhylomeDB" id="Q2KN99"/>
<dbReference type="PRO" id="PR:Q2KN99"/>
<dbReference type="Proteomes" id="UP000002494">
    <property type="component" value="Chromosome 20"/>
</dbReference>
<dbReference type="Bgee" id="ENSRNOG00000001303">
    <property type="expression patterns" value="Expressed in lung and 18 other cell types or tissues"/>
</dbReference>
<dbReference type="GO" id="GO:0015629">
    <property type="term" value="C:actin cytoskeleton"/>
    <property type="evidence" value="ECO:0000266"/>
    <property type="project" value="RGD"/>
</dbReference>
<dbReference type="GO" id="GO:0005911">
    <property type="term" value="C:cell-cell junction"/>
    <property type="evidence" value="ECO:0000266"/>
    <property type="project" value="RGD"/>
</dbReference>
<dbReference type="GO" id="GO:0005737">
    <property type="term" value="C:cytoplasm"/>
    <property type="evidence" value="ECO:0000266"/>
    <property type="project" value="RGD"/>
</dbReference>
<dbReference type="GO" id="GO:0031941">
    <property type="term" value="C:filamentous actin"/>
    <property type="evidence" value="ECO:0000266"/>
    <property type="project" value="RGD"/>
</dbReference>
<dbReference type="GO" id="GO:0005921">
    <property type="term" value="C:gap junction"/>
    <property type="evidence" value="ECO:0007669"/>
    <property type="project" value="UniProtKB-SubCell"/>
</dbReference>
<dbReference type="GO" id="GO:0015630">
    <property type="term" value="C:microtubule cytoskeleton"/>
    <property type="evidence" value="ECO:0000266"/>
    <property type="project" value="RGD"/>
</dbReference>
<dbReference type="GO" id="GO:0005815">
    <property type="term" value="C:microtubule organizing center"/>
    <property type="evidence" value="ECO:0000266"/>
    <property type="project" value="RGD"/>
</dbReference>
<dbReference type="GO" id="GO:0005819">
    <property type="term" value="C:spindle"/>
    <property type="evidence" value="ECO:0007669"/>
    <property type="project" value="UniProtKB-SubCell"/>
</dbReference>
<dbReference type="GO" id="GO:0008013">
    <property type="term" value="F:beta-catenin binding"/>
    <property type="evidence" value="ECO:0000266"/>
    <property type="project" value="RGD"/>
</dbReference>
<dbReference type="GO" id="GO:0030036">
    <property type="term" value="P:actin cytoskeleton organization"/>
    <property type="evidence" value="ECO:0000266"/>
    <property type="project" value="RGD"/>
</dbReference>
<dbReference type="GO" id="GO:0034332">
    <property type="term" value="P:adherens junction organization"/>
    <property type="evidence" value="ECO:0000266"/>
    <property type="project" value="RGD"/>
</dbReference>
<dbReference type="GO" id="GO:0061713">
    <property type="term" value="P:anterior neural tube closure"/>
    <property type="evidence" value="ECO:0000266"/>
    <property type="project" value="RGD"/>
</dbReference>
<dbReference type="GO" id="GO:0007155">
    <property type="term" value="P:cell adhesion"/>
    <property type="evidence" value="ECO:0000266"/>
    <property type="project" value="RGD"/>
</dbReference>
<dbReference type="GO" id="GO:0051301">
    <property type="term" value="P:cell division"/>
    <property type="evidence" value="ECO:0007669"/>
    <property type="project" value="UniProtKB-KW"/>
</dbReference>
<dbReference type="GO" id="GO:0016477">
    <property type="term" value="P:cell migration"/>
    <property type="evidence" value="ECO:0000266"/>
    <property type="project" value="RGD"/>
</dbReference>
<dbReference type="GO" id="GO:0030835">
    <property type="term" value="P:negative regulation of actin filament depolymerization"/>
    <property type="evidence" value="ECO:0000266"/>
    <property type="project" value="RGD"/>
</dbReference>
<dbReference type="GO" id="GO:0007026">
    <property type="term" value="P:negative regulation of microtubule depolymerization"/>
    <property type="evidence" value="ECO:0000266"/>
    <property type="project" value="RGD"/>
</dbReference>
<dbReference type="GO" id="GO:0036032">
    <property type="term" value="P:neural crest cell delamination"/>
    <property type="evidence" value="ECO:0000266"/>
    <property type="project" value="RGD"/>
</dbReference>
<dbReference type="GO" id="GO:0051897">
    <property type="term" value="P:positive regulation of phosphatidylinositol 3-kinase/protein kinase B signal transduction"/>
    <property type="evidence" value="ECO:0000266"/>
    <property type="project" value="RGD"/>
</dbReference>
<dbReference type="CDD" id="cd21199">
    <property type="entry name" value="CH_CYTS"/>
    <property type="match status" value="1"/>
</dbReference>
<dbReference type="FunFam" id="1.10.418.10:FF:000020">
    <property type="entry name" value="Cytospin-A isoform 1"/>
    <property type="match status" value="1"/>
</dbReference>
<dbReference type="Gene3D" id="1.10.418.10">
    <property type="entry name" value="Calponin-like domain"/>
    <property type="match status" value="1"/>
</dbReference>
<dbReference type="InterPro" id="IPR001715">
    <property type="entry name" value="CH_dom"/>
</dbReference>
<dbReference type="InterPro" id="IPR036872">
    <property type="entry name" value="CH_dom_sf"/>
</dbReference>
<dbReference type="InterPro" id="IPR050540">
    <property type="entry name" value="F-actin_Monoox_Mical"/>
</dbReference>
<dbReference type="PANTHER" id="PTHR23167">
    <property type="entry name" value="CALPONIN HOMOLOGY DOMAIN-CONTAINING PROTEIN DDB_G0272472-RELATED"/>
    <property type="match status" value="1"/>
</dbReference>
<dbReference type="PANTHER" id="PTHR23167:SF18">
    <property type="entry name" value="CYTOSPIN-A"/>
    <property type="match status" value="1"/>
</dbReference>
<dbReference type="Pfam" id="PF00307">
    <property type="entry name" value="CH"/>
    <property type="match status" value="1"/>
</dbReference>
<dbReference type="SMART" id="SM00033">
    <property type="entry name" value="CH"/>
    <property type="match status" value="1"/>
</dbReference>
<dbReference type="SUPFAM" id="SSF47576">
    <property type="entry name" value="Calponin-homology domain, CH-domain"/>
    <property type="match status" value="1"/>
</dbReference>
<dbReference type="PROSITE" id="PS50021">
    <property type="entry name" value="CH"/>
    <property type="match status" value="1"/>
</dbReference>
<feature type="chain" id="PRO_0000231021" description="Cytospin-A">
    <location>
        <begin position="1"/>
        <end position="1118"/>
    </location>
</feature>
<feature type="domain" description="Calponin-homology (CH)" evidence="5">
    <location>
        <begin position="1012"/>
        <end position="1117"/>
    </location>
</feature>
<feature type="region of interest" description="Disordered" evidence="6">
    <location>
        <begin position="1"/>
        <end position="50"/>
    </location>
</feature>
<feature type="region of interest" description="Disordered" evidence="6">
    <location>
        <begin position="75"/>
        <end position="175"/>
    </location>
</feature>
<feature type="region of interest" description="Disordered" evidence="6">
    <location>
        <begin position="294"/>
        <end position="324"/>
    </location>
</feature>
<feature type="region of interest" description="Disordered" evidence="6">
    <location>
        <begin position="359"/>
        <end position="391"/>
    </location>
</feature>
<feature type="region of interest" description="Disordered" evidence="6">
    <location>
        <begin position="916"/>
        <end position="999"/>
    </location>
</feature>
<feature type="coiled-coil region" evidence="4">
    <location>
        <begin position="168"/>
        <end position="281"/>
    </location>
</feature>
<feature type="coiled-coil region" evidence="4">
    <location>
        <begin position="395"/>
        <end position="450"/>
    </location>
</feature>
<feature type="coiled-coil region" evidence="4">
    <location>
        <begin position="488"/>
        <end position="808"/>
    </location>
</feature>
<feature type="compositionally biased region" description="Low complexity" evidence="6">
    <location>
        <begin position="34"/>
        <end position="48"/>
    </location>
</feature>
<feature type="compositionally biased region" description="Low complexity" evidence="6">
    <location>
        <begin position="80"/>
        <end position="90"/>
    </location>
</feature>
<feature type="compositionally biased region" description="Low complexity" evidence="6">
    <location>
        <begin position="99"/>
        <end position="113"/>
    </location>
</feature>
<feature type="compositionally biased region" description="Basic and acidic residues" evidence="6">
    <location>
        <begin position="120"/>
        <end position="131"/>
    </location>
</feature>
<feature type="compositionally biased region" description="Polar residues" evidence="6">
    <location>
        <begin position="133"/>
        <end position="145"/>
    </location>
</feature>
<feature type="compositionally biased region" description="Basic and acidic residues" evidence="6">
    <location>
        <begin position="158"/>
        <end position="171"/>
    </location>
</feature>
<feature type="compositionally biased region" description="Polar residues" evidence="6">
    <location>
        <begin position="294"/>
        <end position="304"/>
    </location>
</feature>
<feature type="compositionally biased region" description="Low complexity" evidence="6">
    <location>
        <begin position="359"/>
        <end position="373"/>
    </location>
</feature>
<feature type="compositionally biased region" description="Basic and acidic residues" evidence="6">
    <location>
        <begin position="947"/>
        <end position="957"/>
    </location>
</feature>
<feature type="compositionally biased region" description="Low complexity" evidence="6">
    <location>
        <begin position="972"/>
        <end position="992"/>
    </location>
</feature>
<feature type="modified residue" description="Phosphoserine" evidence="2">
    <location>
        <position position="385"/>
    </location>
</feature>
<feature type="modified residue" description="Phosphoserine" evidence="2">
    <location>
        <position position="386"/>
    </location>
</feature>
<feature type="modified residue" description="Phosphoserine" evidence="2">
    <location>
        <position position="390"/>
    </location>
</feature>
<feature type="modified residue" description="Phosphoserine" evidence="3">
    <location>
        <position position="869"/>
    </location>
</feature>
<feature type="modified residue" description="Phosphoserine" evidence="3">
    <location>
        <position position="882"/>
    </location>
</feature>
<feature type="modified residue" description="Phosphoserine" evidence="8">
    <location>
        <position position="888"/>
    </location>
</feature>
<sequence length="1118" mass="124338">MKKANRSAGSVPKVSGISKPQTVEKSKSENSSSAPTGGKPVKPGAAAALSKTKSNDDLLAGMAGGVNVTNGVKAKKSNCSSAAPSAPAPAMTISESKSKSSTGTSSSAKRSTSAGNKESSSTRERLRERTRLNQSKKLPSVSQGANDVALAKRSRSRTATEGDIRMSKSKSDNQISDKAALEAKVKDLLTLAKTKDVEILHLRNELRDMRAQLGISEDHCEGEDRSEEKETIIAHQPTDVESTLLQLQEQNTAIREELNQLKNENRMLKDRLNALGFSLEQRLDNSEKLFGYQSLSPEITPGNQSDGGGTLTSSVEGSAPGSVEDLLSQDENTLMAHQHSNSMDNLDSECSEVYQPLTSSDDALDAPSSSESEGVPSIERSRKGSSGNASEVSVACLTERIHQMEENQHSTSEELQATLQELADLQQITQELNSENERLGEEKVILMESLCQQSDKLEHFGRQIEYFRSLLDEHHISYVIDEDVKSGRYMELEQRYMDLAENARFEREQLLGVQQHLSNTLKMAEQDNKEAQEMIGALKERSHHMERIIESEQKGKAALAATLEEYKATVASDQIEMNRLKAQLEKEKQKVAELYSIHNSGDKSDIQDLLESVRLDKEKAETLASSLQEDLAHTRNDANRLQDTIAKVEDEYRAFQEEAKKQIEDLNMTLEKLRSELEEKETERSDMKETIFELEDEVEQHRAVKLHDNLIISDLENTVKKLQDQKHDLERENKTLHRRLREESAEWRQFQADLQTAVVIANDIKSEAQEEIGDLKRRLHEAQEKNEKLTKELEEIKSRKQEEERGRVYNYMNAVERDLAALRQGMGLSRRSSTSSEPTPTVKTLIKSFDSASQVPNAAAAAIPRTPLSPSPMKTPPAAAVSPMQRHSISGPVSTSKPLTALSDKRSNYGEIPGQEHLLRTSSTSRPASLPRVPAMESAKTISVSRRSSEEMKRDISASEGASPASLMAMGTTSPQLSLSSSPTASVTPSTRSRIREERKDPLSALAREYGGSKRNALLKWCQKKTEGYQNIDITNFSSSWNDGLAFCALLHTYLPAHIPYQELNSQEKKRNFTLAFQAAESVGIKSTLDINEMARTERPDWQNVMLYVTAIYKYFET</sequence>